<comment type="subunit">
    <text evidence="1">Part of the 50S ribosomal subunit. Contacts protein L32.</text>
</comment>
<comment type="similarity">
    <text evidence="1">Belongs to the bacterial ribosomal protein bL17 family.</text>
</comment>
<protein>
    <recommendedName>
        <fullName evidence="1">Large ribosomal subunit protein bL17</fullName>
    </recommendedName>
    <alternativeName>
        <fullName evidence="2">50S ribosomal protein L17</fullName>
    </alternativeName>
</protein>
<dbReference type="EMBL" id="CP000930">
    <property type="protein sequence ID" value="ABZ83985.1"/>
    <property type="molecule type" value="Genomic_DNA"/>
</dbReference>
<dbReference type="RefSeq" id="WP_012282501.1">
    <property type="nucleotide sequence ID" value="NC_010337.2"/>
</dbReference>
<dbReference type="SMR" id="B0TC86"/>
<dbReference type="STRING" id="498761.HM1_1408"/>
<dbReference type="KEGG" id="hmo:HM1_1408"/>
<dbReference type="eggNOG" id="COG0203">
    <property type="taxonomic scope" value="Bacteria"/>
</dbReference>
<dbReference type="HOGENOM" id="CLU_074407_2_2_9"/>
<dbReference type="OrthoDB" id="9809073at2"/>
<dbReference type="Proteomes" id="UP000008550">
    <property type="component" value="Chromosome"/>
</dbReference>
<dbReference type="GO" id="GO:0022625">
    <property type="term" value="C:cytosolic large ribosomal subunit"/>
    <property type="evidence" value="ECO:0007669"/>
    <property type="project" value="TreeGrafter"/>
</dbReference>
<dbReference type="GO" id="GO:0003735">
    <property type="term" value="F:structural constituent of ribosome"/>
    <property type="evidence" value="ECO:0007669"/>
    <property type="project" value="InterPro"/>
</dbReference>
<dbReference type="GO" id="GO:0006412">
    <property type="term" value="P:translation"/>
    <property type="evidence" value="ECO:0007669"/>
    <property type="project" value="UniProtKB-UniRule"/>
</dbReference>
<dbReference type="FunFam" id="3.90.1030.10:FF:000001">
    <property type="entry name" value="50S ribosomal protein L17"/>
    <property type="match status" value="1"/>
</dbReference>
<dbReference type="Gene3D" id="3.90.1030.10">
    <property type="entry name" value="Ribosomal protein L17"/>
    <property type="match status" value="1"/>
</dbReference>
<dbReference type="HAMAP" id="MF_01368">
    <property type="entry name" value="Ribosomal_bL17"/>
    <property type="match status" value="1"/>
</dbReference>
<dbReference type="InterPro" id="IPR000456">
    <property type="entry name" value="Ribosomal_bL17"/>
</dbReference>
<dbReference type="InterPro" id="IPR047859">
    <property type="entry name" value="Ribosomal_bL17_CS"/>
</dbReference>
<dbReference type="InterPro" id="IPR036373">
    <property type="entry name" value="Ribosomal_bL17_sf"/>
</dbReference>
<dbReference type="NCBIfam" id="TIGR00059">
    <property type="entry name" value="L17"/>
    <property type="match status" value="1"/>
</dbReference>
<dbReference type="PANTHER" id="PTHR14413:SF16">
    <property type="entry name" value="LARGE RIBOSOMAL SUBUNIT PROTEIN BL17M"/>
    <property type="match status" value="1"/>
</dbReference>
<dbReference type="PANTHER" id="PTHR14413">
    <property type="entry name" value="RIBOSOMAL PROTEIN L17"/>
    <property type="match status" value="1"/>
</dbReference>
<dbReference type="Pfam" id="PF01196">
    <property type="entry name" value="Ribosomal_L17"/>
    <property type="match status" value="1"/>
</dbReference>
<dbReference type="SUPFAM" id="SSF64263">
    <property type="entry name" value="Prokaryotic ribosomal protein L17"/>
    <property type="match status" value="1"/>
</dbReference>
<dbReference type="PROSITE" id="PS01167">
    <property type="entry name" value="RIBOSOMAL_L17"/>
    <property type="match status" value="1"/>
</dbReference>
<evidence type="ECO:0000255" key="1">
    <source>
        <dbReference type="HAMAP-Rule" id="MF_01368"/>
    </source>
</evidence>
<evidence type="ECO:0000305" key="2"/>
<feature type="chain" id="PRO_1000144432" description="Large ribosomal subunit protein bL17">
    <location>
        <begin position="1"/>
        <end position="112"/>
    </location>
</feature>
<accession>B0TC86</accession>
<keyword id="KW-1185">Reference proteome</keyword>
<keyword id="KW-0687">Ribonucleoprotein</keyword>
<keyword id="KW-0689">Ribosomal protein</keyword>
<proteinExistence type="inferred from homology"/>
<reference key="1">
    <citation type="journal article" date="2008" name="J. Bacteriol.">
        <title>The genome of Heliobacterium modesticaldum, a phototrophic representative of the Firmicutes containing the simplest photosynthetic apparatus.</title>
        <authorList>
            <person name="Sattley W.M."/>
            <person name="Madigan M.T."/>
            <person name="Swingley W.D."/>
            <person name="Cheung P.C."/>
            <person name="Clocksin K.M."/>
            <person name="Conrad A.L."/>
            <person name="Dejesa L.C."/>
            <person name="Honchak B.M."/>
            <person name="Jung D.O."/>
            <person name="Karbach L.E."/>
            <person name="Kurdoglu A."/>
            <person name="Lahiri S."/>
            <person name="Mastrian S.D."/>
            <person name="Page L.E."/>
            <person name="Taylor H.L."/>
            <person name="Wang Z.T."/>
            <person name="Raymond J."/>
            <person name="Chen M."/>
            <person name="Blankenship R.E."/>
            <person name="Touchman J.W."/>
        </authorList>
    </citation>
    <scope>NUCLEOTIDE SEQUENCE [LARGE SCALE GENOMIC DNA]</scope>
    <source>
        <strain>ATCC 51547 / Ice1</strain>
    </source>
</reference>
<sequence>MPYRKFSRPTNHRRALLRNITTSLLKHGKIVTTEPKAKELRRIADKMITLGKQGDLHARRQALAFIQEESVVTHLFKEIAPKYATRQGGYTRVLKAGFRRGDAAPMCIVELV</sequence>
<organism>
    <name type="scientific">Heliobacterium modesticaldum (strain ATCC 51547 / Ice1)</name>
    <dbReference type="NCBI Taxonomy" id="498761"/>
    <lineage>
        <taxon>Bacteria</taxon>
        <taxon>Bacillati</taxon>
        <taxon>Bacillota</taxon>
        <taxon>Clostridia</taxon>
        <taxon>Eubacteriales</taxon>
        <taxon>Heliobacteriaceae</taxon>
        <taxon>Heliomicrobium</taxon>
    </lineage>
</organism>
<gene>
    <name evidence="1" type="primary">rplQ</name>
    <name type="ordered locus">Helmi_13600</name>
    <name type="ORF">HM1_1408</name>
</gene>
<name>RL17_HELMI</name>